<feature type="signal peptide" evidence="2">
    <location>
        <begin position="1"/>
        <end position="21"/>
    </location>
</feature>
<feature type="chain" id="PRO_0000395231" description="Probable beta-galactosidase B">
    <location>
        <begin position="22"/>
        <end position="1009"/>
    </location>
</feature>
<feature type="active site" description="Proton donor" evidence="2">
    <location>
        <position position="191"/>
    </location>
</feature>
<feature type="active site" description="Nucleophile" evidence="2">
    <location>
        <position position="303"/>
    </location>
</feature>
<feature type="binding site" evidence="1">
    <location>
        <position position="85"/>
    </location>
    <ligand>
        <name>substrate</name>
    </ligand>
</feature>
<feature type="binding site" evidence="1">
    <location>
        <position position="130"/>
    </location>
    <ligand>
        <name>substrate</name>
    </ligand>
</feature>
<feature type="binding site" evidence="1">
    <location>
        <position position="131"/>
    </location>
    <ligand>
        <name>substrate</name>
    </ligand>
</feature>
<feature type="binding site" evidence="1">
    <location>
        <position position="132"/>
    </location>
    <ligand>
        <name>substrate</name>
    </ligand>
</feature>
<feature type="binding site" evidence="1">
    <location>
        <position position="190"/>
    </location>
    <ligand>
        <name>substrate</name>
    </ligand>
</feature>
<feature type="binding site" evidence="1">
    <location>
        <position position="260"/>
    </location>
    <ligand>
        <name>substrate</name>
    </ligand>
</feature>
<feature type="binding site" evidence="1">
    <location>
        <position position="368"/>
    </location>
    <ligand>
        <name>substrate</name>
    </ligand>
</feature>
<feature type="glycosylation site" description="N-linked (GlcNAc...) asparagine" evidence="2">
    <location>
        <position position="28"/>
    </location>
</feature>
<feature type="glycosylation site" description="N-linked (GlcNAc...) asparagine" evidence="2">
    <location>
        <position position="95"/>
    </location>
</feature>
<feature type="glycosylation site" description="N-linked (GlcNAc...) asparagine" evidence="2">
    <location>
        <position position="247"/>
    </location>
</feature>
<feature type="glycosylation site" description="N-linked (GlcNAc...) asparagine" evidence="2">
    <location>
        <position position="375"/>
    </location>
</feature>
<feature type="glycosylation site" description="N-linked (GlcNAc...) asparagine" evidence="2">
    <location>
        <position position="406"/>
    </location>
</feature>
<feature type="glycosylation site" description="N-linked (GlcNAc...) asparagine" evidence="2">
    <location>
        <position position="427"/>
    </location>
</feature>
<feature type="glycosylation site" description="N-linked (GlcNAc...) asparagine" evidence="2">
    <location>
        <position position="451"/>
    </location>
</feature>
<feature type="glycosylation site" description="N-linked (GlcNAc...) asparagine" evidence="2">
    <location>
        <position position="682"/>
    </location>
</feature>
<feature type="glycosylation site" description="N-linked (GlcNAc...) asparagine" evidence="2">
    <location>
        <position position="740"/>
    </location>
</feature>
<feature type="glycosylation site" description="N-linked (GlcNAc...) asparagine" evidence="2">
    <location>
        <position position="771"/>
    </location>
</feature>
<feature type="glycosylation site" description="N-linked (GlcNAc...) asparagine" evidence="2">
    <location>
        <position position="784"/>
    </location>
</feature>
<feature type="glycosylation site" description="N-linked (GlcNAc...) asparagine" evidence="2">
    <location>
        <position position="826"/>
    </location>
</feature>
<feature type="glycosylation site" description="N-linked (GlcNAc...) asparagine" evidence="2">
    <location>
        <position position="883"/>
    </location>
</feature>
<feature type="disulfide bond" evidence="1">
    <location>
        <begin position="266"/>
        <end position="319"/>
    </location>
</feature>
<accession>B6QLF0</accession>
<evidence type="ECO:0000250" key="1"/>
<evidence type="ECO:0000255" key="2"/>
<evidence type="ECO:0000305" key="3"/>
<name>BGALB_TALMQ</name>
<protein>
    <recommendedName>
        <fullName>Probable beta-galactosidase B</fullName>
        <ecNumber>3.2.1.23</ecNumber>
    </recommendedName>
    <alternativeName>
        <fullName>Lactase B</fullName>
    </alternativeName>
</protein>
<organism>
    <name type="scientific">Talaromyces marneffei (strain ATCC 18224 / CBS 334.59 / QM 7333)</name>
    <name type="common">Penicillium marneffei</name>
    <dbReference type="NCBI Taxonomy" id="441960"/>
    <lineage>
        <taxon>Eukaryota</taxon>
        <taxon>Fungi</taxon>
        <taxon>Dikarya</taxon>
        <taxon>Ascomycota</taxon>
        <taxon>Pezizomycotina</taxon>
        <taxon>Eurotiomycetes</taxon>
        <taxon>Eurotiomycetidae</taxon>
        <taxon>Eurotiales</taxon>
        <taxon>Trichocomaceae</taxon>
        <taxon>Talaromyces</taxon>
        <taxon>Talaromyces sect. Talaromyces</taxon>
    </lineage>
</organism>
<proteinExistence type="inferred from homology"/>
<dbReference type="EC" id="3.2.1.23"/>
<dbReference type="EMBL" id="DS995903">
    <property type="protein sequence ID" value="EEA21927.1"/>
    <property type="molecule type" value="Genomic_DNA"/>
</dbReference>
<dbReference type="RefSeq" id="XP_002150536.1">
    <property type="nucleotide sequence ID" value="XM_002150500.1"/>
</dbReference>
<dbReference type="SMR" id="B6QLF0"/>
<dbReference type="STRING" id="441960.B6QLF0"/>
<dbReference type="GlyCosmos" id="B6QLF0">
    <property type="glycosylation" value="13 sites, No reported glycans"/>
</dbReference>
<dbReference type="VEuPathDB" id="FungiDB:PMAA_057160"/>
<dbReference type="HOGENOM" id="CLU_005732_2_0_1"/>
<dbReference type="OrthoDB" id="3395at28568"/>
<dbReference type="PhylomeDB" id="B6QLF0"/>
<dbReference type="Proteomes" id="UP000001294">
    <property type="component" value="Unassembled WGS sequence"/>
</dbReference>
<dbReference type="GO" id="GO:0005576">
    <property type="term" value="C:extracellular region"/>
    <property type="evidence" value="ECO:0007669"/>
    <property type="project" value="UniProtKB-SubCell"/>
</dbReference>
<dbReference type="GO" id="GO:0004565">
    <property type="term" value="F:beta-galactosidase activity"/>
    <property type="evidence" value="ECO:0007669"/>
    <property type="project" value="UniProtKB-EC"/>
</dbReference>
<dbReference type="GO" id="GO:0000272">
    <property type="term" value="P:polysaccharide catabolic process"/>
    <property type="evidence" value="ECO:0007669"/>
    <property type="project" value="UniProtKB-KW"/>
</dbReference>
<dbReference type="FunFam" id="2.102.20.10:FF:000001">
    <property type="entry name" value="Beta-galactosidase A"/>
    <property type="match status" value="1"/>
</dbReference>
<dbReference type="FunFam" id="2.60.120.260:FF:000065">
    <property type="entry name" value="Beta-galactosidase A"/>
    <property type="match status" value="1"/>
</dbReference>
<dbReference type="FunFam" id="3.20.20.80:FF:000040">
    <property type="entry name" value="Beta-galactosidase A"/>
    <property type="match status" value="1"/>
</dbReference>
<dbReference type="Gene3D" id="2.102.20.10">
    <property type="entry name" value="Beta-galactosidase, domain 2"/>
    <property type="match status" value="1"/>
</dbReference>
<dbReference type="Gene3D" id="2.60.390.10">
    <property type="entry name" value="Beta-galactosidase, domain 3"/>
    <property type="match status" value="1"/>
</dbReference>
<dbReference type="Gene3D" id="2.60.120.260">
    <property type="entry name" value="Galactose-binding domain-like"/>
    <property type="match status" value="2"/>
</dbReference>
<dbReference type="Gene3D" id="3.20.20.80">
    <property type="entry name" value="Glycosidases"/>
    <property type="match status" value="1"/>
</dbReference>
<dbReference type="InterPro" id="IPR018954">
    <property type="entry name" value="Betagal_dom2"/>
</dbReference>
<dbReference type="InterPro" id="IPR037110">
    <property type="entry name" value="Betagal_dom2_sf"/>
</dbReference>
<dbReference type="InterPro" id="IPR025972">
    <property type="entry name" value="BetaGal_dom3"/>
</dbReference>
<dbReference type="InterPro" id="IPR036833">
    <property type="entry name" value="BetaGal_dom3_sf"/>
</dbReference>
<dbReference type="InterPro" id="IPR025300">
    <property type="entry name" value="BetaGal_jelly_roll_dom"/>
</dbReference>
<dbReference type="InterPro" id="IPR008979">
    <property type="entry name" value="Galactose-bd-like_sf"/>
</dbReference>
<dbReference type="InterPro" id="IPR031330">
    <property type="entry name" value="Gly_Hdrlase_35_cat"/>
</dbReference>
<dbReference type="InterPro" id="IPR001944">
    <property type="entry name" value="Glycoside_Hdrlase_35"/>
</dbReference>
<dbReference type="InterPro" id="IPR017853">
    <property type="entry name" value="Glycoside_hydrolase_SF"/>
</dbReference>
<dbReference type="PANTHER" id="PTHR23421">
    <property type="entry name" value="BETA-GALACTOSIDASE RELATED"/>
    <property type="match status" value="1"/>
</dbReference>
<dbReference type="Pfam" id="PF13364">
    <property type="entry name" value="BetaGal_ABD2"/>
    <property type="match status" value="2"/>
</dbReference>
<dbReference type="Pfam" id="PF10435">
    <property type="entry name" value="BetaGal_dom2"/>
    <property type="match status" value="1"/>
</dbReference>
<dbReference type="Pfam" id="PF13363">
    <property type="entry name" value="BetaGal_dom3"/>
    <property type="match status" value="1"/>
</dbReference>
<dbReference type="Pfam" id="PF01301">
    <property type="entry name" value="Glyco_hydro_35"/>
    <property type="match status" value="1"/>
</dbReference>
<dbReference type="PRINTS" id="PR00742">
    <property type="entry name" value="GLHYDRLASE35"/>
</dbReference>
<dbReference type="SMART" id="SM01029">
    <property type="entry name" value="BetaGal_dom2"/>
    <property type="match status" value="1"/>
</dbReference>
<dbReference type="SUPFAM" id="SSF51445">
    <property type="entry name" value="(Trans)glycosidases"/>
    <property type="match status" value="1"/>
</dbReference>
<dbReference type="SUPFAM" id="SSF117100">
    <property type="entry name" value="Beta-galactosidase LacA, domain 3"/>
    <property type="match status" value="1"/>
</dbReference>
<dbReference type="SUPFAM" id="SSF49785">
    <property type="entry name" value="Galactose-binding domain-like"/>
    <property type="match status" value="2"/>
</dbReference>
<dbReference type="SUPFAM" id="SSF51011">
    <property type="entry name" value="Glycosyl hydrolase domain"/>
    <property type="match status" value="1"/>
</dbReference>
<sequence>MAQLFTKIIVYFLLFASPLLANQWPLHNNSLNDVVQWDHYSFEINGQRLFVFAGEWHYWRIPVPELWIDILEKIKAAGFTAFGIYVNWAYHAPNNYTVDFATGAHDITPILKMAKDVGLYVLLRPGPYINAEVNAGGFPLWVTTGEYGSLRNDDSRYTAAWEPYFTKISEIASEYQITKGGNVVTYQIENEFGDQWTGSPSRRVQYEPAAKYMELLEANARRNGIDIPLVANEPNMRAISWGKDWSNSSANVDVVGLDSYPSCWTCDLSVCTGTTGEYIAYQVIDYYGYFQETQPTMPSFFAEFQGGSYNPWGGPVGGCPEDIGPDFANLFYRWNIGQRVTAINLYMLYGGTNWGAIAAPVVASSYDYSSPISENRTIGAKYYETKLLTMFTRAARDLIVTDLIGNGTQYSTNPAIQTHVIRNPITNGTFYVTLHTISSSSTDETFQLHVNTSAGAFSIPRYGNSIRLNGHQSKIIVTDFQFGTHKLLYSTAEVLTYTVLDGIPTLALWVPTGESGEFSVLGGKWASVLRCEWCSDIQFHPEQDQTSNPTVSRLTVSFTQGQGMSVIKLDTGLRVVLLDRESAYYFWAPALNSDPSVPEDQSVLVQGPHLVRSAKIVGSTIRLTGDSAQTSPIEVFAPKQVRIIFWNDKELKTSKTSYDSLQASLPQPAYVKLPLLGPWKYNGSLPEKAQDYKDTSAAWISADHMKTSNPSPPATFPVLYADEYGFHNSIRIWRGYFTGNATGVVLKVQGGYAFGFSGWLNGKLLGSYLGNASVEHSHLTLPFNVSHVSTSSDNVLVIVHDDTGHDETTGALNPRGILEATLLSDNSSSKFSHWRVAGTAGGETNIDPMRGPYNEGGLYAERMGWHLPGFNDNAWSDAGSKLNFTGADIKFYRTTVPLNIPKGVDVSISFELSACGTTNAFRSQLFVNGYQMGRFNPWVGNQIEFPVPPGILDYTGDNTIGLSLWAQTEDGACAIVDWKINYVLGSSLDVTFNGEYLRPGWTSERLQYS</sequence>
<gene>
    <name type="primary">lacB</name>
    <name type="ORF">PMAA_057160</name>
</gene>
<comment type="function">
    <text evidence="1">Cleaves beta-linked terminal galactosyl residues from gangliosides, glycoproteins, and glycosaminoglycans.</text>
</comment>
<comment type="catalytic activity">
    <reaction>
        <text>Hydrolysis of terminal non-reducing beta-D-galactose residues in beta-D-galactosides.</text>
        <dbReference type="EC" id="3.2.1.23"/>
    </reaction>
</comment>
<comment type="subcellular location">
    <subcellularLocation>
        <location evidence="1">Secreted</location>
    </subcellularLocation>
</comment>
<comment type="similarity">
    <text evidence="3">Belongs to the glycosyl hydrolase 35 family.</text>
</comment>
<reference key="1">
    <citation type="journal article" date="2015" name="Genome Announc.">
        <title>Genome sequence of the AIDS-associated pathogen Penicillium marneffei (ATCC18224) and its near taxonomic relative Talaromyces stipitatus (ATCC10500).</title>
        <authorList>
            <person name="Nierman W.C."/>
            <person name="Fedorova-Abrams N.D."/>
            <person name="Andrianopoulos A."/>
        </authorList>
    </citation>
    <scope>NUCLEOTIDE SEQUENCE [LARGE SCALE GENOMIC DNA]</scope>
    <source>
        <strain>ATCC 18224 / CBS 334.59 / QM 7333</strain>
    </source>
</reference>
<keyword id="KW-0119">Carbohydrate metabolism</keyword>
<keyword id="KW-1015">Disulfide bond</keyword>
<keyword id="KW-0325">Glycoprotein</keyword>
<keyword id="KW-0326">Glycosidase</keyword>
<keyword id="KW-0378">Hydrolase</keyword>
<keyword id="KW-0624">Polysaccharide degradation</keyword>
<keyword id="KW-1185">Reference proteome</keyword>
<keyword id="KW-0964">Secreted</keyword>
<keyword id="KW-0732">Signal</keyword>